<feature type="chain" id="PRO_1000013141" description="Putative membrane protein insertion efficiency factor">
    <location>
        <begin position="1"/>
        <end position="72"/>
    </location>
</feature>
<keyword id="KW-0997">Cell inner membrane</keyword>
<keyword id="KW-1003">Cell membrane</keyword>
<keyword id="KW-0472">Membrane</keyword>
<dbReference type="EMBL" id="CP000393">
    <property type="protein sequence ID" value="ABG53660.1"/>
    <property type="molecule type" value="Genomic_DNA"/>
</dbReference>
<dbReference type="RefSeq" id="WP_011613977.1">
    <property type="nucleotide sequence ID" value="NC_008312.1"/>
</dbReference>
<dbReference type="STRING" id="203124.Tery_4697"/>
<dbReference type="KEGG" id="ter:Tery_4697"/>
<dbReference type="eggNOG" id="COG0759">
    <property type="taxonomic scope" value="Bacteria"/>
</dbReference>
<dbReference type="HOGENOM" id="CLU_144811_5_2_3"/>
<dbReference type="OrthoDB" id="9801753at2"/>
<dbReference type="GO" id="GO:0005886">
    <property type="term" value="C:plasma membrane"/>
    <property type="evidence" value="ECO:0007669"/>
    <property type="project" value="UniProtKB-SubCell"/>
</dbReference>
<dbReference type="HAMAP" id="MF_00386">
    <property type="entry name" value="UPF0161_YidD"/>
    <property type="match status" value="1"/>
</dbReference>
<dbReference type="InterPro" id="IPR002696">
    <property type="entry name" value="Membr_insert_effic_factor_YidD"/>
</dbReference>
<dbReference type="NCBIfam" id="TIGR00278">
    <property type="entry name" value="membrane protein insertion efficiency factor YidD"/>
    <property type="match status" value="1"/>
</dbReference>
<dbReference type="PANTHER" id="PTHR33383">
    <property type="entry name" value="MEMBRANE PROTEIN INSERTION EFFICIENCY FACTOR-RELATED"/>
    <property type="match status" value="1"/>
</dbReference>
<dbReference type="PANTHER" id="PTHR33383:SF1">
    <property type="entry name" value="MEMBRANE PROTEIN INSERTION EFFICIENCY FACTOR-RELATED"/>
    <property type="match status" value="1"/>
</dbReference>
<dbReference type="Pfam" id="PF01809">
    <property type="entry name" value="YidD"/>
    <property type="match status" value="1"/>
</dbReference>
<dbReference type="SMART" id="SM01234">
    <property type="entry name" value="Haemolytic"/>
    <property type="match status" value="1"/>
</dbReference>
<comment type="function">
    <text evidence="1">Could be involved in insertion of integral membrane proteins into the membrane.</text>
</comment>
<comment type="subcellular location">
    <subcellularLocation>
        <location evidence="1">Cell inner membrane</location>
        <topology evidence="1">Peripheral membrane protein</topology>
        <orientation evidence="1">Cytoplasmic side</orientation>
    </subcellularLocation>
</comment>
<comment type="similarity">
    <text evidence="1">Belongs to the UPF0161 family.</text>
</comment>
<evidence type="ECO:0000255" key="1">
    <source>
        <dbReference type="HAMAP-Rule" id="MF_00386"/>
    </source>
</evidence>
<protein>
    <recommendedName>
        <fullName evidence="1">Putative membrane protein insertion efficiency factor</fullName>
    </recommendedName>
</protein>
<proteinExistence type="inferred from homology"/>
<gene>
    <name type="ordered locus">Tery_4697</name>
</gene>
<organism>
    <name type="scientific">Trichodesmium erythraeum (strain IMS101)</name>
    <dbReference type="NCBI Taxonomy" id="203124"/>
    <lineage>
        <taxon>Bacteria</taxon>
        <taxon>Bacillati</taxon>
        <taxon>Cyanobacteriota</taxon>
        <taxon>Cyanophyceae</taxon>
        <taxon>Oscillatoriophycideae</taxon>
        <taxon>Oscillatoriales</taxon>
        <taxon>Microcoleaceae</taxon>
        <taxon>Trichodesmium</taxon>
    </lineage>
</organism>
<accession>Q10VR4</accession>
<name>YIDD_TRIEI</name>
<sequence>MKVLLVRLIKGYKIFISPILPPSCRFQPTCSEYAMEAIERFGIFKGTAMAVMRILRCHPFHPGGYDPVPPKK</sequence>
<reference key="1">
    <citation type="journal article" date="2015" name="Proc. Natl. Acad. Sci. U.S.A.">
        <title>Trichodesmium genome maintains abundant, widespread noncoding DNA in situ, despite oligotrophic lifestyle.</title>
        <authorList>
            <person name="Walworth N."/>
            <person name="Pfreundt U."/>
            <person name="Nelson W.C."/>
            <person name="Mincer T."/>
            <person name="Heidelberg J.F."/>
            <person name="Fu F."/>
            <person name="Waterbury J.B."/>
            <person name="Glavina del Rio T."/>
            <person name="Goodwin L."/>
            <person name="Kyrpides N.C."/>
            <person name="Land M.L."/>
            <person name="Woyke T."/>
            <person name="Hutchins D.A."/>
            <person name="Hess W.R."/>
            <person name="Webb E.A."/>
        </authorList>
    </citation>
    <scope>NUCLEOTIDE SEQUENCE [LARGE SCALE GENOMIC DNA]</scope>
    <source>
        <strain>IMS101</strain>
    </source>
</reference>